<sequence>MTSVASSSSRIVTESPVVVALDYNNRDSALAFVDLIDPRDCRLKVGKEMFTLFGPQIVRDLQQRGFDVFLDLKFHDIPNTTAHAVAAAADLGVWMVNVHASGGARMMTAAREALIPFGKDAPLLIAVTVLTSMEASDLLDLGVTLSPAEHAERLARLTQNCGLDGVVCSAQEAVRFKSALGHNFKLVTPGIRPQGSDAGDQRRIMTPEEALAAGVDYMVIGRPVTQSADPALTLKAINASLGKVTG</sequence>
<feature type="chain" id="PRO_1000065908" description="Orotidine 5'-phosphate decarboxylase">
    <location>
        <begin position="1"/>
        <end position="246"/>
    </location>
</feature>
<feature type="active site" description="Proton donor" evidence="1">
    <location>
        <position position="73"/>
    </location>
</feature>
<feature type="binding site" evidence="1">
    <location>
        <position position="22"/>
    </location>
    <ligand>
        <name>substrate</name>
    </ligand>
</feature>
<feature type="binding site" evidence="1">
    <location>
        <position position="44"/>
    </location>
    <ligand>
        <name>substrate</name>
    </ligand>
</feature>
<feature type="binding site" evidence="1">
    <location>
        <begin position="71"/>
        <end position="80"/>
    </location>
    <ligand>
        <name>substrate</name>
    </ligand>
</feature>
<feature type="binding site" evidence="1">
    <location>
        <position position="131"/>
    </location>
    <ligand>
        <name>substrate</name>
    </ligand>
</feature>
<feature type="binding site" evidence="1">
    <location>
        <position position="192"/>
    </location>
    <ligand>
        <name>substrate</name>
    </ligand>
</feature>
<feature type="binding site" evidence="1">
    <location>
        <position position="201"/>
    </location>
    <ligand>
        <name>substrate</name>
    </ligand>
</feature>
<feature type="binding site" evidence="1">
    <location>
        <position position="221"/>
    </location>
    <ligand>
        <name>substrate</name>
    </ligand>
</feature>
<feature type="binding site" evidence="1">
    <location>
        <position position="222"/>
    </location>
    <ligand>
        <name>substrate</name>
    </ligand>
</feature>
<accession>A4WAY2</accession>
<reference key="1">
    <citation type="journal article" date="2010" name="PLoS Genet.">
        <title>Genome sequence of the plant growth promoting endophytic bacterium Enterobacter sp. 638.</title>
        <authorList>
            <person name="Taghavi S."/>
            <person name="van der Lelie D."/>
            <person name="Hoffman A."/>
            <person name="Zhang Y.B."/>
            <person name="Walla M.D."/>
            <person name="Vangronsveld J."/>
            <person name="Newman L."/>
            <person name="Monchy S."/>
        </authorList>
    </citation>
    <scope>NUCLEOTIDE SEQUENCE [LARGE SCALE GENOMIC DNA]</scope>
    <source>
        <strain>638</strain>
    </source>
</reference>
<name>PYRF_ENT38</name>
<gene>
    <name evidence="1" type="primary">pyrF</name>
    <name type="ordered locus">Ent638_2187</name>
</gene>
<organism>
    <name type="scientific">Enterobacter sp. (strain 638)</name>
    <dbReference type="NCBI Taxonomy" id="399742"/>
    <lineage>
        <taxon>Bacteria</taxon>
        <taxon>Pseudomonadati</taxon>
        <taxon>Pseudomonadota</taxon>
        <taxon>Gammaproteobacteria</taxon>
        <taxon>Enterobacterales</taxon>
        <taxon>Enterobacteriaceae</taxon>
        <taxon>Enterobacter</taxon>
    </lineage>
</organism>
<comment type="function">
    <text evidence="1">Catalyzes the decarboxylation of orotidine 5'-monophosphate (OMP) to uridine 5'-monophosphate (UMP).</text>
</comment>
<comment type="catalytic activity">
    <reaction evidence="1">
        <text>orotidine 5'-phosphate + H(+) = UMP + CO2</text>
        <dbReference type="Rhea" id="RHEA:11596"/>
        <dbReference type="ChEBI" id="CHEBI:15378"/>
        <dbReference type="ChEBI" id="CHEBI:16526"/>
        <dbReference type="ChEBI" id="CHEBI:57538"/>
        <dbReference type="ChEBI" id="CHEBI:57865"/>
        <dbReference type="EC" id="4.1.1.23"/>
    </reaction>
</comment>
<comment type="pathway">
    <text evidence="1">Pyrimidine metabolism; UMP biosynthesis via de novo pathway; UMP from orotate: step 2/2.</text>
</comment>
<comment type="subunit">
    <text evidence="1">Homodimer.</text>
</comment>
<comment type="similarity">
    <text evidence="1">Belongs to the OMP decarboxylase family. Type 1 subfamily.</text>
</comment>
<protein>
    <recommendedName>
        <fullName evidence="1">Orotidine 5'-phosphate decarboxylase</fullName>
        <ecNumber evidence="1">4.1.1.23</ecNumber>
    </recommendedName>
    <alternativeName>
        <fullName evidence="1">OMP decarboxylase</fullName>
        <shortName evidence="1">OMPDCase</shortName>
        <shortName evidence="1">OMPdecase</shortName>
    </alternativeName>
</protein>
<dbReference type="EC" id="4.1.1.23" evidence="1"/>
<dbReference type="EMBL" id="CP000653">
    <property type="protein sequence ID" value="ABP60862.1"/>
    <property type="molecule type" value="Genomic_DNA"/>
</dbReference>
<dbReference type="RefSeq" id="WP_012017577.1">
    <property type="nucleotide sequence ID" value="NC_009436.1"/>
</dbReference>
<dbReference type="SMR" id="A4WAY2"/>
<dbReference type="STRING" id="399742.Ent638_2187"/>
<dbReference type="KEGG" id="ent:Ent638_2187"/>
<dbReference type="eggNOG" id="COG0284">
    <property type="taxonomic scope" value="Bacteria"/>
</dbReference>
<dbReference type="HOGENOM" id="CLU_067069_0_0_6"/>
<dbReference type="OrthoDB" id="9806203at2"/>
<dbReference type="UniPathway" id="UPA00070">
    <property type="reaction ID" value="UER00120"/>
</dbReference>
<dbReference type="Proteomes" id="UP000000230">
    <property type="component" value="Chromosome"/>
</dbReference>
<dbReference type="GO" id="GO:0005829">
    <property type="term" value="C:cytosol"/>
    <property type="evidence" value="ECO:0007669"/>
    <property type="project" value="TreeGrafter"/>
</dbReference>
<dbReference type="GO" id="GO:0004590">
    <property type="term" value="F:orotidine-5'-phosphate decarboxylase activity"/>
    <property type="evidence" value="ECO:0007669"/>
    <property type="project" value="UniProtKB-UniRule"/>
</dbReference>
<dbReference type="GO" id="GO:0006207">
    <property type="term" value="P:'de novo' pyrimidine nucleobase biosynthetic process"/>
    <property type="evidence" value="ECO:0007669"/>
    <property type="project" value="InterPro"/>
</dbReference>
<dbReference type="GO" id="GO:0044205">
    <property type="term" value="P:'de novo' UMP biosynthetic process"/>
    <property type="evidence" value="ECO:0007669"/>
    <property type="project" value="UniProtKB-UniRule"/>
</dbReference>
<dbReference type="CDD" id="cd04725">
    <property type="entry name" value="OMP_decarboxylase_like"/>
    <property type="match status" value="1"/>
</dbReference>
<dbReference type="FunFam" id="3.20.20.70:FF:000015">
    <property type="entry name" value="Orotidine 5'-phosphate decarboxylase"/>
    <property type="match status" value="1"/>
</dbReference>
<dbReference type="Gene3D" id="3.20.20.70">
    <property type="entry name" value="Aldolase class I"/>
    <property type="match status" value="1"/>
</dbReference>
<dbReference type="HAMAP" id="MF_01200_B">
    <property type="entry name" value="OMPdecase_type1_B"/>
    <property type="match status" value="1"/>
</dbReference>
<dbReference type="InterPro" id="IPR013785">
    <property type="entry name" value="Aldolase_TIM"/>
</dbReference>
<dbReference type="InterPro" id="IPR014732">
    <property type="entry name" value="OMPdecase"/>
</dbReference>
<dbReference type="InterPro" id="IPR018089">
    <property type="entry name" value="OMPdecase_AS"/>
</dbReference>
<dbReference type="InterPro" id="IPR047596">
    <property type="entry name" value="OMPdecase_bac"/>
</dbReference>
<dbReference type="InterPro" id="IPR001754">
    <property type="entry name" value="OMPdeCOase_dom"/>
</dbReference>
<dbReference type="InterPro" id="IPR011060">
    <property type="entry name" value="RibuloseP-bd_barrel"/>
</dbReference>
<dbReference type="NCBIfam" id="NF001273">
    <property type="entry name" value="PRK00230.1"/>
    <property type="match status" value="1"/>
</dbReference>
<dbReference type="NCBIfam" id="TIGR01740">
    <property type="entry name" value="pyrF"/>
    <property type="match status" value="1"/>
</dbReference>
<dbReference type="PANTHER" id="PTHR32119">
    <property type="entry name" value="OROTIDINE 5'-PHOSPHATE DECARBOXYLASE"/>
    <property type="match status" value="1"/>
</dbReference>
<dbReference type="PANTHER" id="PTHR32119:SF2">
    <property type="entry name" value="OROTIDINE 5'-PHOSPHATE DECARBOXYLASE"/>
    <property type="match status" value="1"/>
</dbReference>
<dbReference type="Pfam" id="PF00215">
    <property type="entry name" value="OMPdecase"/>
    <property type="match status" value="1"/>
</dbReference>
<dbReference type="SMART" id="SM00934">
    <property type="entry name" value="OMPdecase"/>
    <property type="match status" value="1"/>
</dbReference>
<dbReference type="SUPFAM" id="SSF51366">
    <property type="entry name" value="Ribulose-phoshate binding barrel"/>
    <property type="match status" value="1"/>
</dbReference>
<dbReference type="PROSITE" id="PS00156">
    <property type="entry name" value="OMPDECASE"/>
    <property type="match status" value="1"/>
</dbReference>
<evidence type="ECO:0000255" key="1">
    <source>
        <dbReference type="HAMAP-Rule" id="MF_01200"/>
    </source>
</evidence>
<keyword id="KW-0210">Decarboxylase</keyword>
<keyword id="KW-0456">Lyase</keyword>
<keyword id="KW-0665">Pyrimidine biosynthesis</keyword>
<proteinExistence type="inferred from homology"/>